<keyword id="KW-0963">Cytoplasm</keyword>
<keyword id="KW-0456">Lyase</keyword>
<keyword id="KW-1185">Reference proteome</keyword>
<keyword id="KW-0704">Schiff base</keyword>
<protein>
    <recommendedName>
        <fullName evidence="1">Deoxyribose-phosphate aldolase</fullName>
        <shortName evidence="1">DERA</shortName>
        <ecNumber evidence="1">4.1.2.4</ecNumber>
    </recommendedName>
    <alternativeName>
        <fullName evidence="1">2-deoxy-D-ribose 5-phosphate aldolase</fullName>
    </alternativeName>
    <alternativeName>
        <fullName evidence="1">Phosphodeoxyriboaldolase</fullName>
        <shortName evidence="1">Deoxyriboaldolase</shortName>
    </alternativeName>
</protein>
<proteinExistence type="inferred from homology"/>
<name>DEOC_CLOTE</name>
<evidence type="ECO:0000255" key="1">
    <source>
        <dbReference type="HAMAP-Rule" id="MF_00114"/>
    </source>
</evidence>
<reference key="1">
    <citation type="journal article" date="2003" name="Proc. Natl. Acad. Sci. U.S.A.">
        <title>The genome sequence of Clostridium tetani, the causative agent of tetanus disease.</title>
        <authorList>
            <person name="Brueggemann H."/>
            <person name="Baeumer S."/>
            <person name="Fricke W.F."/>
            <person name="Wiezer A."/>
            <person name="Liesegang H."/>
            <person name="Decker I."/>
            <person name="Herzberg C."/>
            <person name="Martinez-Arias R."/>
            <person name="Merkl R."/>
            <person name="Henne A."/>
            <person name="Gottschalk G."/>
        </authorList>
    </citation>
    <scope>NUCLEOTIDE SEQUENCE [LARGE SCALE GENOMIC DNA]</scope>
    <source>
        <strain>Massachusetts / E88</strain>
    </source>
</reference>
<gene>
    <name evidence="1" type="primary">deoC</name>
    <name type="ordered locus">CTC_01994</name>
</gene>
<comment type="function">
    <text evidence="1">Catalyzes a reversible aldol reaction between acetaldehyde and D-glyceraldehyde 3-phosphate to generate 2-deoxy-D-ribose 5-phosphate.</text>
</comment>
<comment type="catalytic activity">
    <reaction evidence="1">
        <text>2-deoxy-D-ribose 5-phosphate = D-glyceraldehyde 3-phosphate + acetaldehyde</text>
        <dbReference type="Rhea" id="RHEA:12821"/>
        <dbReference type="ChEBI" id="CHEBI:15343"/>
        <dbReference type="ChEBI" id="CHEBI:59776"/>
        <dbReference type="ChEBI" id="CHEBI:62877"/>
        <dbReference type="EC" id="4.1.2.4"/>
    </reaction>
</comment>
<comment type="pathway">
    <text evidence="1">Carbohydrate degradation; 2-deoxy-D-ribose 1-phosphate degradation; D-glyceraldehyde 3-phosphate and acetaldehyde from 2-deoxy-alpha-D-ribose 1-phosphate: step 2/2.</text>
</comment>
<comment type="subcellular location">
    <subcellularLocation>
        <location evidence="1">Cytoplasm</location>
    </subcellularLocation>
</comment>
<comment type="similarity">
    <text evidence="1">Belongs to the DeoC/FbaB aldolase family. DeoC type 1 subfamily.</text>
</comment>
<organism>
    <name type="scientific">Clostridium tetani (strain Massachusetts / E88)</name>
    <dbReference type="NCBI Taxonomy" id="212717"/>
    <lineage>
        <taxon>Bacteria</taxon>
        <taxon>Bacillati</taxon>
        <taxon>Bacillota</taxon>
        <taxon>Clostridia</taxon>
        <taxon>Eubacteriales</taxon>
        <taxon>Clostridiaceae</taxon>
        <taxon>Clostridium</taxon>
    </lineage>
</organism>
<feature type="chain" id="PRO_0000057228" description="Deoxyribose-phosphate aldolase">
    <location>
        <begin position="1"/>
        <end position="216"/>
    </location>
</feature>
<feature type="active site" description="Proton donor/acceptor" evidence="1">
    <location>
        <position position="89"/>
    </location>
</feature>
<feature type="active site" description="Schiff-base intermediate with acetaldehyde" evidence="1">
    <location>
        <position position="152"/>
    </location>
</feature>
<feature type="active site" description="Proton donor/acceptor" evidence="1">
    <location>
        <position position="181"/>
    </location>
</feature>
<sequence>MEIQKFIDHTILKPEATEEQVKKLCKEARDYKFASVCVNPYYTSLVSKELQGTDVKTCVVIGFPLGANTKEVKAFETKQAIENGAKEVDMVINIGALKDKKYDVVKEDIEAVVNEAKGKALVKVIIETCLLTDEEKVKACEISKEVGADFVKTSTGFSTGGAKKEDVKLMRETVGENIGVKASGGIRDYKTSLEMIEAGANRIGASAGIKIVEESK</sequence>
<dbReference type="EC" id="4.1.2.4" evidence="1"/>
<dbReference type="EMBL" id="AE015927">
    <property type="protein sequence ID" value="AAO36500.1"/>
    <property type="molecule type" value="Genomic_DNA"/>
</dbReference>
<dbReference type="RefSeq" id="WP_011100158.1">
    <property type="nucleotide sequence ID" value="NC_004557.1"/>
</dbReference>
<dbReference type="SMR" id="Q892U4"/>
<dbReference type="STRING" id="212717.CTC_01994"/>
<dbReference type="GeneID" id="24253061"/>
<dbReference type="KEGG" id="ctc:CTC_01994"/>
<dbReference type="HOGENOM" id="CLU_053595_0_1_9"/>
<dbReference type="OrthoDB" id="9778711at2"/>
<dbReference type="UniPathway" id="UPA00002">
    <property type="reaction ID" value="UER00468"/>
</dbReference>
<dbReference type="Proteomes" id="UP000001412">
    <property type="component" value="Chromosome"/>
</dbReference>
<dbReference type="GO" id="GO:0005737">
    <property type="term" value="C:cytoplasm"/>
    <property type="evidence" value="ECO:0007669"/>
    <property type="project" value="UniProtKB-SubCell"/>
</dbReference>
<dbReference type="GO" id="GO:0004139">
    <property type="term" value="F:deoxyribose-phosphate aldolase activity"/>
    <property type="evidence" value="ECO:0007669"/>
    <property type="project" value="UniProtKB-UniRule"/>
</dbReference>
<dbReference type="GO" id="GO:0006018">
    <property type="term" value="P:2-deoxyribose 1-phosphate catabolic process"/>
    <property type="evidence" value="ECO:0007669"/>
    <property type="project" value="UniProtKB-UniRule"/>
</dbReference>
<dbReference type="GO" id="GO:0016052">
    <property type="term" value="P:carbohydrate catabolic process"/>
    <property type="evidence" value="ECO:0007669"/>
    <property type="project" value="TreeGrafter"/>
</dbReference>
<dbReference type="GO" id="GO:0009264">
    <property type="term" value="P:deoxyribonucleotide catabolic process"/>
    <property type="evidence" value="ECO:0007669"/>
    <property type="project" value="InterPro"/>
</dbReference>
<dbReference type="CDD" id="cd00959">
    <property type="entry name" value="DeoC"/>
    <property type="match status" value="1"/>
</dbReference>
<dbReference type="FunFam" id="3.20.20.70:FF:000044">
    <property type="entry name" value="Deoxyribose-phosphate aldolase"/>
    <property type="match status" value="1"/>
</dbReference>
<dbReference type="Gene3D" id="3.20.20.70">
    <property type="entry name" value="Aldolase class I"/>
    <property type="match status" value="1"/>
</dbReference>
<dbReference type="HAMAP" id="MF_00114">
    <property type="entry name" value="DeoC_type1"/>
    <property type="match status" value="1"/>
</dbReference>
<dbReference type="InterPro" id="IPR013785">
    <property type="entry name" value="Aldolase_TIM"/>
</dbReference>
<dbReference type="InterPro" id="IPR011343">
    <property type="entry name" value="DeoC"/>
</dbReference>
<dbReference type="InterPro" id="IPR002915">
    <property type="entry name" value="DeoC/FbaB/LacD_aldolase"/>
</dbReference>
<dbReference type="InterPro" id="IPR028581">
    <property type="entry name" value="DeoC_typeI"/>
</dbReference>
<dbReference type="NCBIfam" id="TIGR00126">
    <property type="entry name" value="deoC"/>
    <property type="match status" value="1"/>
</dbReference>
<dbReference type="PANTHER" id="PTHR10889">
    <property type="entry name" value="DEOXYRIBOSE-PHOSPHATE ALDOLASE"/>
    <property type="match status" value="1"/>
</dbReference>
<dbReference type="PANTHER" id="PTHR10889:SF1">
    <property type="entry name" value="DEOXYRIBOSE-PHOSPHATE ALDOLASE"/>
    <property type="match status" value="1"/>
</dbReference>
<dbReference type="Pfam" id="PF01791">
    <property type="entry name" value="DeoC"/>
    <property type="match status" value="1"/>
</dbReference>
<dbReference type="PIRSF" id="PIRSF001357">
    <property type="entry name" value="DeoC"/>
    <property type="match status" value="1"/>
</dbReference>
<dbReference type="SMART" id="SM01133">
    <property type="entry name" value="DeoC"/>
    <property type="match status" value="1"/>
</dbReference>
<dbReference type="SUPFAM" id="SSF51569">
    <property type="entry name" value="Aldolase"/>
    <property type="match status" value="1"/>
</dbReference>
<accession>Q892U4</accession>